<proteinExistence type="inferred from homology"/>
<name>IPDE1_MYCS2</name>
<dbReference type="EC" id="1.3.99.-" evidence="1"/>
<dbReference type="EMBL" id="CP000480">
    <property type="protein sequence ID" value="ABK71994.1"/>
    <property type="molecule type" value="Genomic_DNA"/>
</dbReference>
<dbReference type="RefSeq" id="WP_003897413.1">
    <property type="nucleotide sequence ID" value="NZ_SIJM01000017.1"/>
</dbReference>
<dbReference type="RefSeq" id="YP_890237.1">
    <property type="nucleotide sequence ID" value="NC_008596.1"/>
</dbReference>
<dbReference type="SMR" id="A0R4Z9"/>
<dbReference type="STRING" id="246196.MSMEG_6012"/>
<dbReference type="PaxDb" id="246196-MSMEI_5852"/>
<dbReference type="GeneID" id="93460645"/>
<dbReference type="KEGG" id="msb:LJ00_29725"/>
<dbReference type="KEGG" id="msm:MSMEG_6012"/>
<dbReference type="PATRIC" id="fig|246196.19.peg.5848"/>
<dbReference type="eggNOG" id="COG1960">
    <property type="taxonomic scope" value="Bacteria"/>
</dbReference>
<dbReference type="OrthoDB" id="5179760at2"/>
<dbReference type="UniPathway" id="UPA01058"/>
<dbReference type="Proteomes" id="UP000000757">
    <property type="component" value="Chromosome"/>
</dbReference>
<dbReference type="GO" id="GO:0005886">
    <property type="term" value="C:plasma membrane"/>
    <property type="evidence" value="ECO:0007669"/>
    <property type="project" value="TreeGrafter"/>
</dbReference>
<dbReference type="GO" id="GO:0050660">
    <property type="term" value="F:flavin adenine dinucleotide binding"/>
    <property type="evidence" value="ECO:0007669"/>
    <property type="project" value="InterPro"/>
</dbReference>
<dbReference type="GO" id="GO:0016627">
    <property type="term" value="F:oxidoreductase activity, acting on the CH-CH group of donors"/>
    <property type="evidence" value="ECO:0007669"/>
    <property type="project" value="InterPro"/>
</dbReference>
<dbReference type="GO" id="GO:0006707">
    <property type="term" value="P:cholesterol catabolic process"/>
    <property type="evidence" value="ECO:0007669"/>
    <property type="project" value="UniProtKB-UniPathway"/>
</dbReference>
<dbReference type="Gene3D" id="1.10.540.10">
    <property type="entry name" value="Acyl-CoA dehydrogenase/oxidase, N-terminal domain"/>
    <property type="match status" value="1"/>
</dbReference>
<dbReference type="Gene3D" id="2.40.110.10">
    <property type="entry name" value="Butyryl-CoA Dehydrogenase, subunit A, domain 2"/>
    <property type="match status" value="1"/>
</dbReference>
<dbReference type="Gene3D" id="1.20.140.10">
    <property type="entry name" value="Butyryl-CoA Dehydrogenase, subunit A, domain 3"/>
    <property type="match status" value="1"/>
</dbReference>
<dbReference type="InterPro" id="IPR006091">
    <property type="entry name" value="Acyl-CoA_Oxase/DH_mid-dom"/>
</dbReference>
<dbReference type="InterPro" id="IPR046373">
    <property type="entry name" value="Acyl-CoA_Oxase/DH_mid-dom_sf"/>
</dbReference>
<dbReference type="InterPro" id="IPR036250">
    <property type="entry name" value="AcylCo_DH-like_C"/>
</dbReference>
<dbReference type="InterPro" id="IPR009075">
    <property type="entry name" value="AcylCo_DH/oxidase_C"/>
</dbReference>
<dbReference type="InterPro" id="IPR013786">
    <property type="entry name" value="AcylCoA_DH/ox_N"/>
</dbReference>
<dbReference type="InterPro" id="IPR037069">
    <property type="entry name" value="AcylCoA_DH/ox_N_sf"/>
</dbReference>
<dbReference type="InterPro" id="IPR009100">
    <property type="entry name" value="AcylCoA_DH/oxidase_NM_dom_sf"/>
</dbReference>
<dbReference type="InterPro" id="IPR052161">
    <property type="entry name" value="Mycobact_Acyl-CoA_DH"/>
</dbReference>
<dbReference type="PANTHER" id="PTHR43292">
    <property type="entry name" value="ACYL-COA DEHYDROGENASE"/>
    <property type="match status" value="1"/>
</dbReference>
<dbReference type="PANTHER" id="PTHR43292:SF3">
    <property type="entry name" value="ACYL-COA DEHYDROGENASE FADE29"/>
    <property type="match status" value="1"/>
</dbReference>
<dbReference type="Pfam" id="PF00441">
    <property type="entry name" value="Acyl-CoA_dh_1"/>
    <property type="match status" value="1"/>
</dbReference>
<dbReference type="Pfam" id="PF02770">
    <property type="entry name" value="Acyl-CoA_dh_M"/>
    <property type="match status" value="1"/>
</dbReference>
<dbReference type="Pfam" id="PF02771">
    <property type="entry name" value="Acyl-CoA_dh_N"/>
    <property type="match status" value="1"/>
</dbReference>
<dbReference type="SUPFAM" id="SSF47203">
    <property type="entry name" value="Acyl-CoA dehydrogenase C-terminal domain-like"/>
    <property type="match status" value="1"/>
</dbReference>
<dbReference type="SUPFAM" id="SSF56645">
    <property type="entry name" value="Acyl-CoA dehydrogenase NM domain-like"/>
    <property type="match status" value="1"/>
</dbReference>
<keyword id="KW-0153">Cholesterol metabolism</keyword>
<keyword id="KW-0274">FAD</keyword>
<keyword id="KW-0285">Flavoprotein</keyword>
<keyword id="KW-0443">Lipid metabolism</keyword>
<keyword id="KW-0560">Oxidoreductase</keyword>
<keyword id="KW-1185">Reference proteome</keyword>
<keyword id="KW-0753">Steroid metabolism</keyword>
<keyword id="KW-1207">Sterol metabolism</keyword>
<organism>
    <name type="scientific">Mycolicibacterium smegmatis (strain ATCC 700084 / mc(2)155)</name>
    <name type="common">Mycobacterium smegmatis</name>
    <dbReference type="NCBI Taxonomy" id="246196"/>
    <lineage>
        <taxon>Bacteria</taxon>
        <taxon>Bacillati</taxon>
        <taxon>Actinomycetota</taxon>
        <taxon>Actinomycetes</taxon>
        <taxon>Mycobacteriales</taxon>
        <taxon>Mycobacteriaceae</taxon>
        <taxon>Mycolicibacterium</taxon>
    </lineage>
</organism>
<accession>A0R4Z9</accession>
<evidence type="ECO:0000250" key="1">
    <source>
        <dbReference type="UniProtKB" id="I6Y3V5"/>
    </source>
</evidence>
<evidence type="ECO:0000250" key="2">
    <source>
        <dbReference type="UniProtKB" id="I6YCA3"/>
    </source>
</evidence>
<evidence type="ECO:0000269" key="3">
    <source>
    </source>
</evidence>
<evidence type="ECO:0000303" key="4">
    <source>
    </source>
</evidence>
<evidence type="ECO:0000305" key="5"/>
<evidence type="ECO:0000312" key="6">
    <source>
        <dbReference type="EMBL" id="ABK71994.1"/>
    </source>
</evidence>
<feature type="chain" id="PRO_0000452316" description="Acyl-CoA dehydrogenase IpdE1">
    <location>
        <begin position="1"/>
        <end position="392"/>
    </location>
</feature>
<feature type="active site" description="Proton acceptor" evidence="2">
    <location>
        <position position="254"/>
    </location>
</feature>
<feature type="binding site" evidence="2">
    <location>
        <begin position="126"/>
        <end position="129"/>
    </location>
    <ligand>
        <name>FAD</name>
        <dbReference type="ChEBI" id="CHEBI:57692"/>
    </ligand>
</feature>
<feature type="binding site" evidence="2">
    <location>
        <position position="171"/>
    </location>
    <ligand>
        <name>FAD</name>
        <dbReference type="ChEBI" id="CHEBI:57692"/>
    </ligand>
</feature>
<feature type="binding site" evidence="2">
    <location>
        <begin position="371"/>
        <end position="373"/>
    </location>
    <ligand>
        <name>FAD</name>
        <dbReference type="ChEBI" id="CHEBI:57692"/>
    </ligand>
</feature>
<sequence>MIEVQEFRAEVRQWLADNLVGDFAALKGLGGPGREHEAFEERRAWNQHLAAAGLTCLGWPVEHGGRGLSVAHRVAFYEEYARANAPDKVNHFGEELLGPTLIEYGTPEQQKRFLPKILDVTELWCQGYSEPNAGSDLANVSTTAELVGDAEASGATGNQYWVINGQKVWTSLAHWAQWCFVVARTEKGSKRHAGLSYLLVPLDQPGVEIRPINQLTGDSEFNEVFFDDARTEAGLVVGQPGDGWRVAMGTLTFERGVSTLGQQIRYAREHSNLVELAKRTGAADDPLIRERLVQSWTGLQAMRSYALATMDVEQPGQDNVSKLLWANWHRELGEIAMDVQGMAGLTLENGEFDEWQRLYLFSRADTIYGGSNEIQRNIIAERVLGLPREVKG</sequence>
<protein>
    <recommendedName>
        <fullName evidence="5">Acyl-CoA dehydrogenase IpdE1</fullName>
        <ecNumber evidence="1">1.3.99.-</ecNumber>
    </recommendedName>
    <alternativeName>
        <fullName evidence="5">5OH-HIP-CoA dehydrogenase alpha subunit</fullName>
    </alternativeName>
</protein>
<reference key="1">
    <citation type="submission" date="2006-10" db="EMBL/GenBank/DDBJ databases">
        <authorList>
            <person name="Fleischmann R.D."/>
            <person name="Dodson R.J."/>
            <person name="Haft D.H."/>
            <person name="Merkel J.S."/>
            <person name="Nelson W.C."/>
            <person name="Fraser C.M."/>
        </authorList>
    </citation>
    <scope>NUCLEOTIDE SEQUENCE [LARGE SCALE GENOMIC DNA]</scope>
    <source>
        <strain>ATCC 700084 / mc(2)155</strain>
    </source>
</reference>
<reference key="2">
    <citation type="journal article" date="2020" name="Biochemistry">
        <title>IpdE1-IpdE2 is a heterotetrameric acyl coenzyme A dehydrogenase that is widely distributed in steroid-degrading bacteria.</title>
        <authorList>
            <person name="Gadbery J.E."/>
            <person name="Round J.W."/>
            <person name="Yuan T."/>
            <person name="Wipperman M.F."/>
            <person name="Story K.T."/>
            <person name="Crowe A.M."/>
            <person name="Casabon I."/>
            <person name="Liu J."/>
            <person name="Yang X."/>
            <person name="Eltis L.D."/>
            <person name="Sampson N.S."/>
        </authorList>
    </citation>
    <scope>PATHWAY</scope>
    <scope>DISRUPTION PHENOTYPE</scope>
</reference>
<gene>
    <name evidence="4" type="primary">ipdE1</name>
    <name evidence="6" type="ordered locus">MSMEG_6012</name>
</gene>
<comment type="function">
    <text evidence="1">Involved in cholesterol degradation. Catalyzes the dehydrogenation of 5OH-HIP-CoA to 5OH-HIPE-CoA.</text>
</comment>
<comment type="catalytic activity">
    <reaction evidence="1">
        <text>3-[(3aS,4S,5R,7aS)-5-hydroxy-7a-methyl-1-oxo-octahydro-1H-inden-4-yl]propanoyl-CoA + A = (2E)-3-[(3aS,4S,5R,7aS)-5-hydroxy-7a-methyl-1-oxo-octahydro-1H-inden-4-yl]prop-2-enoyl-CoA + AH2</text>
        <dbReference type="Rhea" id="RHEA:66348"/>
        <dbReference type="ChEBI" id="CHEBI:13193"/>
        <dbReference type="ChEBI" id="CHEBI:17499"/>
        <dbReference type="ChEBI" id="CHEBI:83738"/>
        <dbReference type="ChEBI" id="CHEBI:167059"/>
    </reaction>
    <physiologicalReaction direction="left-to-right" evidence="1">
        <dbReference type="Rhea" id="RHEA:66349"/>
    </physiologicalReaction>
</comment>
<comment type="cofactor">
    <cofactor evidence="1">
        <name>FAD</name>
        <dbReference type="ChEBI" id="CHEBI:57692"/>
    </cofactor>
    <text evidence="1">Binds 2 FAD per heterotetramer.</text>
</comment>
<comment type="pathway">
    <text evidence="3">Steroid metabolism; cholesterol degradation.</text>
</comment>
<comment type="subunit">
    <text evidence="1">Heterotetramer composed of 2 IpdE1 subunits and 2 IpdE2 subunits.</text>
</comment>
<comment type="disruption phenotype">
    <text evidence="3">Deletion mutant grows normally on glycerol but shows impaired growth on cholesterol. It accumulates 5OH-HIP in the culture supernatant.</text>
</comment>
<comment type="similarity">
    <text evidence="5">Belongs to the acyl-CoA dehydrogenase family.</text>
</comment>